<feature type="chain" id="PRO_0000101391" description="Uncharacterized protein RP547">
    <location>
        <begin position="1"/>
        <end position="106"/>
    </location>
</feature>
<sequence>MSRVYKIKNLEEARNFLYSIEEPLILTNDDSSIKYYGMLVIDYMFKTLRREFPEKVLALTVNVGQDHAALFTAIKLGYKNIVYIGASAEAKRLLSDLYNNPITYKV</sequence>
<organism>
    <name type="scientific">Rickettsia prowazekii (strain Madrid E)</name>
    <dbReference type="NCBI Taxonomy" id="272947"/>
    <lineage>
        <taxon>Bacteria</taxon>
        <taxon>Pseudomonadati</taxon>
        <taxon>Pseudomonadota</taxon>
        <taxon>Alphaproteobacteria</taxon>
        <taxon>Rickettsiales</taxon>
        <taxon>Rickettsiaceae</taxon>
        <taxon>Rickettsieae</taxon>
        <taxon>Rickettsia</taxon>
        <taxon>typhus group</taxon>
    </lineage>
</organism>
<keyword id="KW-1185">Reference proteome</keyword>
<name>Y547_RICPR</name>
<reference key="1">
    <citation type="journal article" date="1998" name="Nature">
        <title>The genome sequence of Rickettsia prowazekii and the origin of mitochondria.</title>
        <authorList>
            <person name="Andersson S.G.E."/>
            <person name="Zomorodipour A."/>
            <person name="Andersson J.O."/>
            <person name="Sicheritz-Ponten T."/>
            <person name="Alsmark U.C.M."/>
            <person name="Podowski R.M."/>
            <person name="Naeslund A.K."/>
            <person name="Eriksson A.-S."/>
            <person name="Winkler H.H."/>
            <person name="Kurland C.G."/>
        </authorList>
    </citation>
    <scope>NUCLEOTIDE SEQUENCE [LARGE SCALE GENOMIC DNA]</scope>
    <source>
        <strain>Madrid E</strain>
    </source>
</reference>
<dbReference type="EMBL" id="AJ235272">
    <property type="protein sequence ID" value="CAA14996.1"/>
    <property type="molecule type" value="Genomic_DNA"/>
</dbReference>
<dbReference type="PIR" id="B71659">
    <property type="entry name" value="B71659"/>
</dbReference>
<dbReference type="RefSeq" id="NP_220920.1">
    <property type="nucleotide sequence ID" value="NC_000963.1"/>
</dbReference>
<dbReference type="RefSeq" id="WP_004597839.1">
    <property type="nucleotide sequence ID" value="NC_000963.1"/>
</dbReference>
<dbReference type="SMR" id="Q9ZD03"/>
<dbReference type="STRING" id="272947.gene:17555627"/>
<dbReference type="EnsemblBacteria" id="CAA14996">
    <property type="protein sequence ID" value="CAA14996"/>
    <property type="gene ID" value="CAA14996"/>
</dbReference>
<dbReference type="KEGG" id="rpr:RP547"/>
<dbReference type="PATRIC" id="fig|272947.5.peg.558"/>
<dbReference type="eggNOG" id="ENOG5030Z81">
    <property type="taxonomic scope" value="Bacteria"/>
</dbReference>
<dbReference type="HOGENOM" id="CLU_152576_0_0_5"/>
<dbReference type="OrthoDB" id="7161730at2"/>
<dbReference type="Proteomes" id="UP000002480">
    <property type="component" value="Chromosome"/>
</dbReference>
<proteinExistence type="predicted"/>
<accession>Q9ZD03</accession>
<gene>
    <name type="ordered locus">RP547</name>
</gene>
<protein>
    <recommendedName>
        <fullName>Uncharacterized protein RP547</fullName>
    </recommendedName>
</protein>